<organism>
    <name type="scientific">Bacillus cereus (strain ATCC 10987 / NRS 248)</name>
    <dbReference type="NCBI Taxonomy" id="222523"/>
    <lineage>
        <taxon>Bacteria</taxon>
        <taxon>Bacillati</taxon>
        <taxon>Bacillota</taxon>
        <taxon>Bacilli</taxon>
        <taxon>Bacillales</taxon>
        <taxon>Bacillaceae</taxon>
        <taxon>Bacillus</taxon>
        <taxon>Bacillus cereus group</taxon>
    </lineage>
</organism>
<sequence>MITLTGHTLTIEEMKRLLLEGEGVTACPTSMQKVAECREVVEKIVEDGKVVYGITTGFGKFSDVLIQKDDVKALQHNLIQSHACGIGEPFPEEVSRGMLILRANTMLKGVSGVRPLVVNMLLEFVNRKIHPVVPQQGSLGASGDLAPLSHLALVLLGEGEVFYKGKRVHAMVALTEEGLEPIELEAKEGLALINGTQAMTAQGVLSYIEAEATAYQAELIASMTIEGLQGIIDAFDENVHKARGYKEQVEVASRIRDILHDSKLTTKQGELRVQDAYSLRCIPQVHGASWQVLNYVKEKLEIEMNAATDNPLIFDGGEKVISGGNFHGQPIAFAMDFLKVGMAELANISERRIERLVNPQLNDLPPFLSPEPGLQSGAMIMQYAAASLVSENKTLAHPASVDSIPSSANQEDHVSMGTIASRHAHQIIQNVRRVLSIEMICAMQAAEYRGIENMSTVTKSFYHQGRQQVPSITNDRIFSTDIENIAHWLKTNYSIKERLDVNAAL</sequence>
<feature type="chain" id="PRO_0000160986" description="Histidine ammonia-lyase">
    <location>
        <begin position="1"/>
        <end position="505"/>
    </location>
</feature>
<feature type="modified residue" description="2,3-didehydroalanine (Ser)" evidence="1">
    <location>
        <position position="142"/>
    </location>
</feature>
<feature type="cross-link" description="5-imidazolinone (Ala-Gly)" evidence="1">
    <location>
        <begin position="141"/>
        <end position="143"/>
    </location>
</feature>
<protein>
    <recommendedName>
        <fullName evidence="1">Histidine ammonia-lyase</fullName>
        <shortName evidence="1">Histidase</shortName>
        <ecNumber evidence="1">4.3.1.3</ecNumber>
    </recommendedName>
</protein>
<reference key="1">
    <citation type="journal article" date="2004" name="Nucleic Acids Res.">
        <title>The genome sequence of Bacillus cereus ATCC 10987 reveals metabolic adaptations and a large plasmid related to Bacillus anthracis pXO1.</title>
        <authorList>
            <person name="Rasko D.A."/>
            <person name="Ravel J."/>
            <person name="Oekstad O.A."/>
            <person name="Helgason E."/>
            <person name="Cer R.Z."/>
            <person name="Jiang L."/>
            <person name="Shores K.A."/>
            <person name="Fouts D.E."/>
            <person name="Tourasse N.J."/>
            <person name="Angiuoli S.V."/>
            <person name="Kolonay J.F."/>
            <person name="Nelson W.C."/>
            <person name="Kolstoe A.-B."/>
            <person name="Fraser C.M."/>
            <person name="Read T.D."/>
        </authorList>
    </citation>
    <scope>NUCLEOTIDE SEQUENCE [LARGE SCALE GENOMIC DNA]</scope>
    <source>
        <strain>ATCC 10987 / NRS 248</strain>
    </source>
</reference>
<evidence type="ECO:0000255" key="1">
    <source>
        <dbReference type="HAMAP-Rule" id="MF_00229"/>
    </source>
</evidence>
<comment type="catalytic activity">
    <reaction evidence="1">
        <text>L-histidine = trans-urocanate + NH4(+)</text>
        <dbReference type="Rhea" id="RHEA:21232"/>
        <dbReference type="ChEBI" id="CHEBI:17771"/>
        <dbReference type="ChEBI" id="CHEBI:28938"/>
        <dbReference type="ChEBI" id="CHEBI:57595"/>
        <dbReference type="EC" id="4.3.1.3"/>
    </reaction>
</comment>
<comment type="pathway">
    <text evidence="1">Amino-acid degradation; L-histidine degradation into L-glutamate; N-formimidoyl-L-glutamate from L-histidine: step 1/3.</text>
</comment>
<comment type="subcellular location">
    <subcellularLocation>
        <location evidence="1">Cytoplasm</location>
    </subcellularLocation>
</comment>
<comment type="PTM">
    <text evidence="1">Contains an active site 4-methylidene-imidazol-5-one (MIO), which is formed autocatalytically by cyclization and dehydration of residues Ala-Ser-Gly.</text>
</comment>
<comment type="similarity">
    <text evidence="1">Belongs to the PAL/histidase family.</text>
</comment>
<accession>Q733H8</accession>
<name>HUTH_BACC1</name>
<dbReference type="EC" id="4.3.1.3" evidence="1"/>
<dbReference type="EMBL" id="AE017194">
    <property type="protein sequence ID" value="AAS42585.1"/>
    <property type="molecule type" value="Genomic_DNA"/>
</dbReference>
<dbReference type="SMR" id="Q733H8"/>
<dbReference type="KEGG" id="bca:BCE_3680"/>
<dbReference type="HOGENOM" id="CLU_014801_4_0_9"/>
<dbReference type="UniPathway" id="UPA00379">
    <property type="reaction ID" value="UER00549"/>
</dbReference>
<dbReference type="Proteomes" id="UP000002527">
    <property type="component" value="Chromosome"/>
</dbReference>
<dbReference type="GO" id="GO:0005737">
    <property type="term" value="C:cytoplasm"/>
    <property type="evidence" value="ECO:0007669"/>
    <property type="project" value="UniProtKB-SubCell"/>
</dbReference>
<dbReference type="GO" id="GO:0004397">
    <property type="term" value="F:histidine ammonia-lyase activity"/>
    <property type="evidence" value="ECO:0007669"/>
    <property type="project" value="UniProtKB-UniRule"/>
</dbReference>
<dbReference type="GO" id="GO:0019556">
    <property type="term" value="P:L-histidine catabolic process to glutamate and formamide"/>
    <property type="evidence" value="ECO:0007669"/>
    <property type="project" value="UniProtKB-UniPathway"/>
</dbReference>
<dbReference type="GO" id="GO:0019557">
    <property type="term" value="P:L-histidine catabolic process to glutamate and formate"/>
    <property type="evidence" value="ECO:0007669"/>
    <property type="project" value="UniProtKB-UniPathway"/>
</dbReference>
<dbReference type="CDD" id="cd00332">
    <property type="entry name" value="PAL-HAL"/>
    <property type="match status" value="1"/>
</dbReference>
<dbReference type="FunFam" id="1.10.275.10:FF:000008">
    <property type="entry name" value="Histidine ammonia-lyase"/>
    <property type="match status" value="1"/>
</dbReference>
<dbReference type="FunFam" id="1.20.200.10:FF:000003">
    <property type="entry name" value="Histidine ammonia-lyase"/>
    <property type="match status" value="1"/>
</dbReference>
<dbReference type="Gene3D" id="1.20.200.10">
    <property type="entry name" value="Fumarase/aspartase (Central domain)"/>
    <property type="match status" value="1"/>
</dbReference>
<dbReference type="Gene3D" id="1.10.275.10">
    <property type="entry name" value="Fumarase/aspartase (N-terminal domain)"/>
    <property type="match status" value="1"/>
</dbReference>
<dbReference type="HAMAP" id="MF_00229">
    <property type="entry name" value="His_ammonia_lyase"/>
    <property type="match status" value="1"/>
</dbReference>
<dbReference type="InterPro" id="IPR001106">
    <property type="entry name" value="Aromatic_Lyase"/>
</dbReference>
<dbReference type="InterPro" id="IPR024083">
    <property type="entry name" value="Fumarase/histidase_N"/>
</dbReference>
<dbReference type="InterPro" id="IPR005921">
    <property type="entry name" value="HutH"/>
</dbReference>
<dbReference type="InterPro" id="IPR008948">
    <property type="entry name" value="L-Aspartase-like"/>
</dbReference>
<dbReference type="InterPro" id="IPR022313">
    <property type="entry name" value="Phe/His_NH3-lyase_AS"/>
</dbReference>
<dbReference type="NCBIfam" id="TIGR01225">
    <property type="entry name" value="hutH"/>
    <property type="match status" value="1"/>
</dbReference>
<dbReference type="NCBIfam" id="NF006871">
    <property type="entry name" value="PRK09367.1"/>
    <property type="match status" value="1"/>
</dbReference>
<dbReference type="PANTHER" id="PTHR10362">
    <property type="entry name" value="HISTIDINE AMMONIA-LYASE"/>
    <property type="match status" value="1"/>
</dbReference>
<dbReference type="Pfam" id="PF00221">
    <property type="entry name" value="Lyase_aromatic"/>
    <property type="match status" value="1"/>
</dbReference>
<dbReference type="SUPFAM" id="SSF48557">
    <property type="entry name" value="L-aspartase-like"/>
    <property type="match status" value="1"/>
</dbReference>
<dbReference type="PROSITE" id="PS00488">
    <property type="entry name" value="PAL_HISTIDASE"/>
    <property type="match status" value="1"/>
</dbReference>
<keyword id="KW-0963">Cytoplasm</keyword>
<keyword id="KW-0369">Histidine metabolism</keyword>
<keyword id="KW-0456">Lyase</keyword>
<gene>
    <name evidence="1" type="primary">hutH</name>
    <name type="ordered locus">BCE_3680</name>
</gene>
<proteinExistence type="inferred from homology"/>